<organism>
    <name type="scientific">Acidothermus cellulolyticus (strain ATCC 43068 / DSM 8971 / 11B)</name>
    <dbReference type="NCBI Taxonomy" id="351607"/>
    <lineage>
        <taxon>Bacteria</taxon>
        <taxon>Bacillati</taxon>
        <taxon>Actinomycetota</taxon>
        <taxon>Actinomycetes</taxon>
        <taxon>Acidothermales</taxon>
        <taxon>Acidothermaceae</taxon>
        <taxon>Acidothermus</taxon>
    </lineage>
</organism>
<protein>
    <recommendedName>
        <fullName evidence="1">Transcriptional repressor NrdR</fullName>
    </recommendedName>
</protein>
<proteinExistence type="inferred from homology"/>
<keyword id="KW-0067">ATP-binding</keyword>
<keyword id="KW-0238">DNA-binding</keyword>
<keyword id="KW-0479">Metal-binding</keyword>
<keyword id="KW-0547">Nucleotide-binding</keyword>
<keyword id="KW-1185">Reference proteome</keyword>
<keyword id="KW-0678">Repressor</keyword>
<keyword id="KW-0804">Transcription</keyword>
<keyword id="KW-0805">Transcription regulation</keyword>
<keyword id="KW-0862">Zinc</keyword>
<keyword id="KW-0863">Zinc-finger</keyword>
<gene>
    <name evidence="1" type="primary">nrdR</name>
    <name type="ordered locus">Acel_1477</name>
</gene>
<accession>A0LUY9</accession>
<reference key="1">
    <citation type="journal article" date="2009" name="Genome Res.">
        <title>Complete genome of the cellulolytic thermophile Acidothermus cellulolyticus 11B provides insights into its ecophysiological and evolutionary adaptations.</title>
        <authorList>
            <person name="Barabote R.D."/>
            <person name="Xie G."/>
            <person name="Leu D.H."/>
            <person name="Normand P."/>
            <person name="Necsulea A."/>
            <person name="Daubin V."/>
            <person name="Medigue C."/>
            <person name="Adney W.S."/>
            <person name="Xu X.C."/>
            <person name="Lapidus A."/>
            <person name="Parales R.E."/>
            <person name="Detter C."/>
            <person name="Pujic P."/>
            <person name="Bruce D."/>
            <person name="Lavire C."/>
            <person name="Challacombe J.F."/>
            <person name="Brettin T.S."/>
            <person name="Berry A.M."/>
        </authorList>
    </citation>
    <scope>NUCLEOTIDE SEQUENCE [LARGE SCALE GENOMIC DNA]</scope>
    <source>
        <strain>ATCC 43068 / DSM 8971 / 11B</strain>
    </source>
</reference>
<name>NRDR_ACIC1</name>
<sequence length="170" mass="18915">MYCPFCRHPDSRVVDSRVTDDGTAIRRRRSCPECGRRFTTVETAALSVIKRSGVIEPFSRAKVIAGVRKACQGRPVSEDALALLAQRVEDELRATGCSEVTSQEVGLAVLGPLRELDDVAYLRFASVYRGFESLEDFEAEIALQRAERALERSETVERGRPVPSRGVDDR</sequence>
<dbReference type="EMBL" id="CP000481">
    <property type="protein sequence ID" value="ABK53249.1"/>
    <property type="molecule type" value="Genomic_DNA"/>
</dbReference>
<dbReference type="RefSeq" id="WP_011720312.1">
    <property type="nucleotide sequence ID" value="NC_008578.1"/>
</dbReference>
<dbReference type="SMR" id="A0LUY9"/>
<dbReference type="FunCoup" id="A0LUY9">
    <property type="interactions" value="19"/>
</dbReference>
<dbReference type="STRING" id="351607.Acel_1477"/>
<dbReference type="KEGG" id="ace:Acel_1477"/>
<dbReference type="eggNOG" id="COG1327">
    <property type="taxonomic scope" value="Bacteria"/>
</dbReference>
<dbReference type="HOGENOM" id="CLU_108412_1_0_11"/>
<dbReference type="InParanoid" id="A0LUY9"/>
<dbReference type="OrthoDB" id="9807461at2"/>
<dbReference type="Proteomes" id="UP000008221">
    <property type="component" value="Chromosome"/>
</dbReference>
<dbReference type="GO" id="GO:0005524">
    <property type="term" value="F:ATP binding"/>
    <property type="evidence" value="ECO:0007669"/>
    <property type="project" value="UniProtKB-KW"/>
</dbReference>
<dbReference type="GO" id="GO:0003677">
    <property type="term" value="F:DNA binding"/>
    <property type="evidence" value="ECO:0007669"/>
    <property type="project" value="UniProtKB-KW"/>
</dbReference>
<dbReference type="GO" id="GO:0008270">
    <property type="term" value="F:zinc ion binding"/>
    <property type="evidence" value="ECO:0007669"/>
    <property type="project" value="UniProtKB-UniRule"/>
</dbReference>
<dbReference type="GO" id="GO:0045892">
    <property type="term" value="P:negative regulation of DNA-templated transcription"/>
    <property type="evidence" value="ECO:0007669"/>
    <property type="project" value="UniProtKB-UniRule"/>
</dbReference>
<dbReference type="HAMAP" id="MF_00440">
    <property type="entry name" value="NrdR"/>
    <property type="match status" value="1"/>
</dbReference>
<dbReference type="InterPro" id="IPR005144">
    <property type="entry name" value="ATP-cone_dom"/>
</dbReference>
<dbReference type="InterPro" id="IPR055173">
    <property type="entry name" value="NrdR-like_N"/>
</dbReference>
<dbReference type="InterPro" id="IPR003796">
    <property type="entry name" value="RNR_NrdR-like"/>
</dbReference>
<dbReference type="NCBIfam" id="TIGR00244">
    <property type="entry name" value="transcriptional regulator NrdR"/>
    <property type="match status" value="1"/>
</dbReference>
<dbReference type="PANTHER" id="PTHR30455">
    <property type="entry name" value="TRANSCRIPTIONAL REPRESSOR NRDR"/>
    <property type="match status" value="1"/>
</dbReference>
<dbReference type="PANTHER" id="PTHR30455:SF2">
    <property type="entry name" value="TRANSCRIPTIONAL REPRESSOR NRDR"/>
    <property type="match status" value="1"/>
</dbReference>
<dbReference type="Pfam" id="PF03477">
    <property type="entry name" value="ATP-cone"/>
    <property type="match status" value="1"/>
</dbReference>
<dbReference type="Pfam" id="PF22811">
    <property type="entry name" value="Zn_ribbon_NrdR"/>
    <property type="match status" value="1"/>
</dbReference>
<dbReference type="PROSITE" id="PS51161">
    <property type="entry name" value="ATP_CONE"/>
    <property type="match status" value="1"/>
</dbReference>
<comment type="function">
    <text evidence="1">Negatively regulates transcription of bacterial ribonucleotide reductase nrd genes and operons by binding to NrdR-boxes.</text>
</comment>
<comment type="cofactor">
    <cofactor evidence="1">
        <name>Zn(2+)</name>
        <dbReference type="ChEBI" id="CHEBI:29105"/>
    </cofactor>
    <text evidence="1">Binds 1 zinc ion.</text>
</comment>
<comment type="similarity">
    <text evidence="1">Belongs to the NrdR family.</text>
</comment>
<evidence type="ECO:0000255" key="1">
    <source>
        <dbReference type="HAMAP-Rule" id="MF_00440"/>
    </source>
</evidence>
<evidence type="ECO:0000256" key="2">
    <source>
        <dbReference type="SAM" id="MobiDB-lite"/>
    </source>
</evidence>
<feature type="chain" id="PRO_1000080697" description="Transcriptional repressor NrdR">
    <location>
        <begin position="1"/>
        <end position="170"/>
    </location>
</feature>
<feature type="domain" description="ATP-cone" evidence="1">
    <location>
        <begin position="46"/>
        <end position="136"/>
    </location>
</feature>
<feature type="zinc finger region" evidence="1">
    <location>
        <begin position="3"/>
        <end position="34"/>
    </location>
</feature>
<feature type="region of interest" description="Disordered" evidence="2">
    <location>
        <begin position="151"/>
        <end position="170"/>
    </location>
</feature>